<evidence type="ECO:0000250" key="1"/>
<evidence type="ECO:0000255" key="2"/>
<evidence type="ECO:0000305" key="3"/>
<keyword id="KW-0963">Cytoplasm</keyword>
<keyword id="KW-0269">Exonuclease</keyword>
<keyword id="KW-0378">Hydrolase</keyword>
<keyword id="KW-0540">Nuclease</keyword>
<keyword id="KW-1185">Reference proteome</keyword>
<keyword id="KW-0694">RNA-binding</keyword>
<feature type="chain" id="PRO_0000166384" description="Exoribonuclease 2">
    <location>
        <begin position="1"/>
        <end position="659"/>
    </location>
</feature>
<feature type="domain" description="RNB" evidence="2">
    <location>
        <begin position="189"/>
        <end position="531"/>
    </location>
</feature>
<feature type="domain" description="S1 motif">
    <location>
        <begin position="576"/>
        <end position="658"/>
    </location>
</feature>
<protein>
    <recommendedName>
        <fullName>Exoribonuclease 2</fullName>
        <ecNumber>3.1.13.1</ecNumber>
    </recommendedName>
    <alternativeName>
        <fullName>Exoribonuclease II</fullName>
        <shortName>RNase II</shortName>
        <shortName>Ribonuclease II</shortName>
    </alternativeName>
</protein>
<dbReference type="EC" id="3.1.13.1"/>
<dbReference type="EMBL" id="L42023">
    <property type="protein sequence ID" value="AAC23378.1"/>
    <property type="molecule type" value="Genomic_DNA"/>
</dbReference>
<dbReference type="PIR" id="A64139">
    <property type="entry name" value="A64139"/>
</dbReference>
<dbReference type="RefSeq" id="NP_439875.1">
    <property type="nucleotide sequence ID" value="NC_000907.1"/>
</dbReference>
<dbReference type="SMR" id="P44440"/>
<dbReference type="STRING" id="71421.HI_1733"/>
<dbReference type="EnsemblBacteria" id="AAC23378">
    <property type="protein sequence ID" value="AAC23378"/>
    <property type="gene ID" value="HI_1733"/>
</dbReference>
<dbReference type="KEGG" id="hin:HI_1733"/>
<dbReference type="PATRIC" id="fig|71421.8.peg.1814"/>
<dbReference type="eggNOG" id="COG4776">
    <property type="taxonomic scope" value="Bacteria"/>
</dbReference>
<dbReference type="HOGENOM" id="CLU_002333_7_3_6"/>
<dbReference type="OrthoDB" id="9764149at2"/>
<dbReference type="PhylomeDB" id="P44440"/>
<dbReference type="BioCyc" id="HINF71421:G1GJ1-1749-MONOMER"/>
<dbReference type="Proteomes" id="UP000000579">
    <property type="component" value="Chromosome"/>
</dbReference>
<dbReference type="GO" id="GO:0005829">
    <property type="term" value="C:cytosol"/>
    <property type="evidence" value="ECO:0000318"/>
    <property type="project" value="GO_Central"/>
</dbReference>
<dbReference type="GO" id="GO:0008859">
    <property type="term" value="F:exoribonuclease II activity"/>
    <property type="evidence" value="ECO:0007669"/>
    <property type="project" value="UniProtKB-UniRule"/>
</dbReference>
<dbReference type="GO" id="GO:0003723">
    <property type="term" value="F:RNA binding"/>
    <property type="evidence" value="ECO:0007669"/>
    <property type="project" value="UniProtKB-KW"/>
</dbReference>
<dbReference type="GO" id="GO:0006402">
    <property type="term" value="P:mRNA catabolic process"/>
    <property type="evidence" value="ECO:0000318"/>
    <property type="project" value="GO_Central"/>
</dbReference>
<dbReference type="Gene3D" id="2.40.50.640">
    <property type="match status" value="1"/>
</dbReference>
<dbReference type="Gene3D" id="2.40.50.140">
    <property type="entry name" value="Nucleic acid-binding proteins"/>
    <property type="match status" value="2"/>
</dbReference>
<dbReference type="HAMAP" id="MF_01036">
    <property type="entry name" value="RNase_II"/>
    <property type="match status" value="1"/>
</dbReference>
<dbReference type="InterPro" id="IPR011129">
    <property type="entry name" value="CSD"/>
</dbReference>
<dbReference type="InterPro" id="IPR012340">
    <property type="entry name" value="NA-bd_OB-fold"/>
</dbReference>
<dbReference type="InterPro" id="IPR013223">
    <property type="entry name" value="RNase_B_OB_dom"/>
</dbReference>
<dbReference type="InterPro" id="IPR011804">
    <property type="entry name" value="RNase_II"/>
</dbReference>
<dbReference type="InterPro" id="IPR001900">
    <property type="entry name" value="RNase_II/R"/>
</dbReference>
<dbReference type="InterPro" id="IPR022966">
    <property type="entry name" value="RNase_II/R_CS"/>
</dbReference>
<dbReference type="InterPro" id="IPR004476">
    <property type="entry name" value="RNase_II/RNase_R"/>
</dbReference>
<dbReference type="InterPro" id="IPR050180">
    <property type="entry name" value="RNR_Ribonuclease"/>
</dbReference>
<dbReference type="InterPro" id="IPR003029">
    <property type="entry name" value="S1_domain"/>
</dbReference>
<dbReference type="NCBIfam" id="TIGR00358">
    <property type="entry name" value="3_prime_RNase"/>
    <property type="match status" value="1"/>
</dbReference>
<dbReference type="NCBIfam" id="NF003455">
    <property type="entry name" value="PRK05054.1"/>
    <property type="match status" value="1"/>
</dbReference>
<dbReference type="NCBIfam" id="TIGR02062">
    <property type="entry name" value="RNase_B"/>
    <property type="match status" value="1"/>
</dbReference>
<dbReference type="PANTHER" id="PTHR23355:SF37">
    <property type="entry name" value="EXORIBONUCLEASE 2"/>
    <property type="match status" value="1"/>
</dbReference>
<dbReference type="PANTHER" id="PTHR23355">
    <property type="entry name" value="RIBONUCLEASE"/>
    <property type="match status" value="1"/>
</dbReference>
<dbReference type="Pfam" id="PF08206">
    <property type="entry name" value="OB_RNB"/>
    <property type="match status" value="1"/>
</dbReference>
<dbReference type="Pfam" id="PF00773">
    <property type="entry name" value="RNB"/>
    <property type="match status" value="1"/>
</dbReference>
<dbReference type="Pfam" id="PF00575">
    <property type="entry name" value="S1"/>
    <property type="match status" value="1"/>
</dbReference>
<dbReference type="SMART" id="SM00357">
    <property type="entry name" value="CSP"/>
    <property type="match status" value="1"/>
</dbReference>
<dbReference type="SMART" id="SM00955">
    <property type="entry name" value="RNB"/>
    <property type="match status" value="1"/>
</dbReference>
<dbReference type="SMART" id="SM00316">
    <property type="entry name" value="S1"/>
    <property type="match status" value="1"/>
</dbReference>
<dbReference type="SUPFAM" id="SSF50249">
    <property type="entry name" value="Nucleic acid-binding proteins"/>
    <property type="match status" value="4"/>
</dbReference>
<dbReference type="PROSITE" id="PS01175">
    <property type="entry name" value="RIBONUCLEASE_II"/>
    <property type="match status" value="1"/>
</dbReference>
<dbReference type="PROSITE" id="PS50126">
    <property type="entry name" value="S1"/>
    <property type="match status" value="1"/>
</dbReference>
<name>RNB_HAEIN</name>
<sequence>MFQDNPLLAQLKQQIHDSKEQVEGVVKSTDKAYGFLECDKKTYFIAPPSMKKVMHGDKIKATIEKQGDKEQAEPEALIEPMLTRFIAKVRFNKDKKLQVLVDHPSINQPIGAQQAKSVKEELQEGDWVVANLKTHPLRDDRFFYATINQLICRADDELAPWWVTLARHEQSRYPVRGAEPYEMLDQKTRENLTALHFVTIDSESTMDMDDALYIEPIAQNSTQTGWKLVVAIADPTAYIALDSQIEQEAKQRCFTNYLPGFNIPMLPRELSDELCSLIANETRPALVCYIETDLTGNITAKPHFVSAYVQSKAKLAYNKVSDYLEQADNAWQPEMPETAQQIHWLHQFTKARIQWRKTHSLFFKEKPDYAFVLAENGKVQEIKAEYRRIANQIVEEAMIIANICAAQFLHEQAKTGIFNTHSGFDKKFLENAHNFLMANLANEQNQTELAERYSVENLATLNGYCQMRHDIEPIESDYLELRLRRYLTFAEFKSELAPHFGLGLEGYATWTSPIRKYSDMVNHRLIKAVLAKQPYEKPQNDVLARLQEARRQNRLVERDIADWLYCRYLADKVASNAEFEAEVQDVMRAGLRVQLLENGASLFIPAATLHNNKEEIQLNPDELALYIKGERTYKIGDMVKVKLTEVKEATRSIVGEILQ</sequence>
<gene>
    <name type="primary">rnb</name>
    <name type="ordered locus">HI_1733</name>
</gene>
<organism>
    <name type="scientific">Haemophilus influenzae (strain ATCC 51907 / DSM 11121 / KW20 / Rd)</name>
    <dbReference type="NCBI Taxonomy" id="71421"/>
    <lineage>
        <taxon>Bacteria</taxon>
        <taxon>Pseudomonadati</taxon>
        <taxon>Pseudomonadota</taxon>
        <taxon>Gammaproteobacteria</taxon>
        <taxon>Pasteurellales</taxon>
        <taxon>Pasteurellaceae</taxon>
        <taxon>Haemophilus</taxon>
    </lineage>
</organism>
<proteinExistence type="inferred from homology"/>
<accession>P44440</accession>
<comment type="function">
    <text evidence="1">Involved in mRNA degradation. Hydrolyzes single-stranded polyribonucleotides processively in the 3' to 5' direction (By similarity).</text>
</comment>
<comment type="catalytic activity">
    <reaction>
        <text>Exonucleolytic cleavage in the 3'- to 5'-direction to yield nucleoside 5'-phosphates.</text>
        <dbReference type="EC" id="3.1.13.1"/>
    </reaction>
</comment>
<comment type="subcellular location">
    <subcellularLocation>
        <location evidence="1">Cytoplasm</location>
    </subcellularLocation>
</comment>
<comment type="similarity">
    <text evidence="3">Belongs to the RNR ribonuclease family. RNase II subfamily.</text>
</comment>
<reference key="1">
    <citation type="journal article" date="1995" name="Science">
        <title>Whole-genome random sequencing and assembly of Haemophilus influenzae Rd.</title>
        <authorList>
            <person name="Fleischmann R.D."/>
            <person name="Adams M.D."/>
            <person name="White O."/>
            <person name="Clayton R.A."/>
            <person name="Kirkness E.F."/>
            <person name="Kerlavage A.R."/>
            <person name="Bult C.J."/>
            <person name="Tomb J.-F."/>
            <person name="Dougherty B.A."/>
            <person name="Merrick J.M."/>
            <person name="McKenney K."/>
            <person name="Sutton G.G."/>
            <person name="FitzHugh W."/>
            <person name="Fields C.A."/>
            <person name="Gocayne J.D."/>
            <person name="Scott J.D."/>
            <person name="Shirley R."/>
            <person name="Liu L.-I."/>
            <person name="Glodek A."/>
            <person name="Kelley J.M."/>
            <person name="Weidman J.F."/>
            <person name="Phillips C.A."/>
            <person name="Spriggs T."/>
            <person name="Hedblom E."/>
            <person name="Cotton M.D."/>
            <person name="Utterback T.R."/>
            <person name="Hanna M.C."/>
            <person name="Nguyen D.T."/>
            <person name="Saudek D.M."/>
            <person name="Brandon R.C."/>
            <person name="Fine L.D."/>
            <person name="Fritchman J.L."/>
            <person name="Fuhrmann J.L."/>
            <person name="Geoghagen N.S.M."/>
            <person name="Gnehm C.L."/>
            <person name="McDonald L.A."/>
            <person name="Small K.V."/>
            <person name="Fraser C.M."/>
            <person name="Smith H.O."/>
            <person name="Venter J.C."/>
        </authorList>
    </citation>
    <scope>NUCLEOTIDE SEQUENCE [LARGE SCALE GENOMIC DNA]</scope>
    <source>
        <strain>ATCC 51907 / DSM 11121 / KW20 / Rd</strain>
    </source>
</reference>